<accession>Q1GHD2</accession>
<feature type="chain" id="PRO_1000017611" description="Large ribosomal subunit protein bL27">
    <location>
        <begin position="1"/>
        <end position="89"/>
    </location>
</feature>
<comment type="similarity">
    <text evidence="1">Belongs to the bacterial ribosomal protein bL27 family.</text>
</comment>
<name>RL27_RUEST</name>
<dbReference type="EMBL" id="CP000377">
    <property type="protein sequence ID" value="ABF63934.1"/>
    <property type="molecule type" value="Genomic_DNA"/>
</dbReference>
<dbReference type="RefSeq" id="WP_005611266.1">
    <property type="nucleotide sequence ID" value="NC_008044.1"/>
</dbReference>
<dbReference type="SMR" id="Q1GHD2"/>
<dbReference type="STRING" id="292414.TM1040_1201"/>
<dbReference type="GeneID" id="28249639"/>
<dbReference type="KEGG" id="sit:TM1040_1201"/>
<dbReference type="eggNOG" id="COG0211">
    <property type="taxonomic scope" value="Bacteria"/>
</dbReference>
<dbReference type="HOGENOM" id="CLU_095424_4_1_5"/>
<dbReference type="OrthoDB" id="9803474at2"/>
<dbReference type="Proteomes" id="UP000000636">
    <property type="component" value="Chromosome"/>
</dbReference>
<dbReference type="GO" id="GO:0022625">
    <property type="term" value="C:cytosolic large ribosomal subunit"/>
    <property type="evidence" value="ECO:0007669"/>
    <property type="project" value="TreeGrafter"/>
</dbReference>
<dbReference type="GO" id="GO:0003735">
    <property type="term" value="F:structural constituent of ribosome"/>
    <property type="evidence" value="ECO:0007669"/>
    <property type="project" value="InterPro"/>
</dbReference>
<dbReference type="GO" id="GO:0006412">
    <property type="term" value="P:translation"/>
    <property type="evidence" value="ECO:0007669"/>
    <property type="project" value="UniProtKB-UniRule"/>
</dbReference>
<dbReference type="FunFam" id="2.40.50.100:FF:000020">
    <property type="entry name" value="50S ribosomal protein L27"/>
    <property type="match status" value="1"/>
</dbReference>
<dbReference type="Gene3D" id="2.40.50.100">
    <property type="match status" value="1"/>
</dbReference>
<dbReference type="HAMAP" id="MF_00539">
    <property type="entry name" value="Ribosomal_bL27"/>
    <property type="match status" value="1"/>
</dbReference>
<dbReference type="InterPro" id="IPR001684">
    <property type="entry name" value="Ribosomal_bL27"/>
</dbReference>
<dbReference type="InterPro" id="IPR018261">
    <property type="entry name" value="Ribosomal_bL27_CS"/>
</dbReference>
<dbReference type="NCBIfam" id="TIGR00062">
    <property type="entry name" value="L27"/>
    <property type="match status" value="1"/>
</dbReference>
<dbReference type="PANTHER" id="PTHR15893:SF0">
    <property type="entry name" value="LARGE RIBOSOMAL SUBUNIT PROTEIN BL27M"/>
    <property type="match status" value="1"/>
</dbReference>
<dbReference type="PANTHER" id="PTHR15893">
    <property type="entry name" value="RIBOSOMAL PROTEIN L27"/>
    <property type="match status" value="1"/>
</dbReference>
<dbReference type="Pfam" id="PF01016">
    <property type="entry name" value="Ribosomal_L27"/>
    <property type="match status" value="1"/>
</dbReference>
<dbReference type="PRINTS" id="PR00063">
    <property type="entry name" value="RIBOSOMALL27"/>
</dbReference>
<dbReference type="SUPFAM" id="SSF110324">
    <property type="entry name" value="Ribosomal L27 protein-like"/>
    <property type="match status" value="1"/>
</dbReference>
<dbReference type="PROSITE" id="PS00831">
    <property type="entry name" value="RIBOSOMAL_L27"/>
    <property type="match status" value="1"/>
</dbReference>
<evidence type="ECO:0000255" key="1">
    <source>
        <dbReference type="HAMAP-Rule" id="MF_00539"/>
    </source>
</evidence>
<evidence type="ECO:0000305" key="2"/>
<sequence>MAHKKAGGSSRNGRDSAGRRLGVKLYGGQSAIAGNIIVRQRGTKFWPGEGVGIGKDHTIFATANGNVTFHKGLKGRTFISVLPAAEAAE</sequence>
<organism>
    <name type="scientific">Ruegeria sp. (strain TM1040)</name>
    <name type="common">Silicibacter sp.</name>
    <dbReference type="NCBI Taxonomy" id="292414"/>
    <lineage>
        <taxon>Bacteria</taxon>
        <taxon>Pseudomonadati</taxon>
        <taxon>Pseudomonadota</taxon>
        <taxon>Alphaproteobacteria</taxon>
        <taxon>Rhodobacterales</taxon>
        <taxon>Roseobacteraceae</taxon>
        <taxon>Ruegeria</taxon>
    </lineage>
</organism>
<reference key="1">
    <citation type="submission" date="2006-05" db="EMBL/GenBank/DDBJ databases">
        <title>Complete sequence of chromosome of Silicibacter sp. TM1040.</title>
        <authorList>
            <consortium name="US DOE Joint Genome Institute"/>
            <person name="Copeland A."/>
            <person name="Lucas S."/>
            <person name="Lapidus A."/>
            <person name="Barry K."/>
            <person name="Detter J.C."/>
            <person name="Glavina del Rio T."/>
            <person name="Hammon N."/>
            <person name="Israni S."/>
            <person name="Dalin E."/>
            <person name="Tice H."/>
            <person name="Pitluck S."/>
            <person name="Brettin T."/>
            <person name="Bruce D."/>
            <person name="Han C."/>
            <person name="Tapia R."/>
            <person name="Goodwin L."/>
            <person name="Thompson L.S."/>
            <person name="Gilna P."/>
            <person name="Schmutz J."/>
            <person name="Larimer F."/>
            <person name="Land M."/>
            <person name="Hauser L."/>
            <person name="Kyrpides N."/>
            <person name="Kim E."/>
            <person name="Belas R."/>
            <person name="Moran M.A."/>
            <person name="Buchan A."/>
            <person name="Gonzalez J.M."/>
            <person name="Schell M.A."/>
            <person name="Sun F."/>
            <person name="Richardson P."/>
        </authorList>
    </citation>
    <scope>NUCLEOTIDE SEQUENCE [LARGE SCALE GENOMIC DNA]</scope>
    <source>
        <strain>TM1040</strain>
    </source>
</reference>
<protein>
    <recommendedName>
        <fullName evidence="1">Large ribosomal subunit protein bL27</fullName>
    </recommendedName>
    <alternativeName>
        <fullName evidence="2">50S ribosomal protein L27</fullName>
    </alternativeName>
</protein>
<proteinExistence type="inferred from homology"/>
<gene>
    <name evidence="1" type="primary">rpmA</name>
    <name type="ordered locus">TM1040_1201</name>
</gene>
<keyword id="KW-1185">Reference proteome</keyword>
<keyword id="KW-0687">Ribonucleoprotein</keyword>
<keyword id="KW-0689">Ribosomal protein</keyword>